<comment type="similarity">
    <text evidence="2">Belongs to the FAH family.</text>
</comment>
<keyword id="KW-0479">Metal-binding</keyword>
<dbReference type="EMBL" id="BA000001">
    <property type="protein sequence ID" value="BAA29734.1"/>
    <property type="molecule type" value="Genomic_DNA"/>
</dbReference>
<dbReference type="PIR" id="D71109">
    <property type="entry name" value="D71109"/>
</dbReference>
<dbReference type="SMR" id="O58377"/>
<dbReference type="STRING" id="70601.gene:9377587"/>
<dbReference type="EnsemblBacteria" id="BAA29734">
    <property type="protein sequence ID" value="BAA29734"/>
    <property type="gene ID" value="BAA29734"/>
</dbReference>
<dbReference type="KEGG" id="pho:PH0643"/>
<dbReference type="eggNOG" id="arCOG00235">
    <property type="taxonomic scope" value="Archaea"/>
</dbReference>
<dbReference type="Proteomes" id="UP000000752">
    <property type="component" value="Chromosome"/>
</dbReference>
<dbReference type="GO" id="GO:0018773">
    <property type="term" value="F:acetylpyruvate hydrolase activity"/>
    <property type="evidence" value="ECO:0007669"/>
    <property type="project" value="TreeGrafter"/>
</dbReference>
<dbReference type="GO" id="GO:0046872">
    <property type="term" value="F:metal ion binding"/>
    <property type="evidence" value="ECO:0007669"/>
    <property type="project" value="UniProtKB-KW"/>
</dbReference>
<dbReference type="FunFam" id="3.90.850.10:FF:000003">
    <property type="entry name" value="Fumarylacetoacetate hydrolase domain-containing 1"/>
    <property type="match status" value="1"/>
</dbReference>
<dbReference type="Gene3D" id="3.90.850.10">
    <property type="entry name" value="Fumarylacetoacetase-like, C-terminal domain"/>
    <property type="match status" value="1"/>
</dbReference>
<dbReference type="InterPro" id="IPR011234">
    <property type="entry name" value="Fumarylacetoacetase-like_C"/>
</dbReference>
<dbReference type="InterPro" id="IPR036663">
    <property type="entry name" value="Fumarylacetoacetase_C_sf"/>
</dbReference>
<dbReference type="PANTHER" id="PTHR11820">
    <property type="entry name" value="ACYLPYRUVASE"/>
    <property type="match status" value="1"/>
</dbReference>
<dbReference type="PANTHER" id="PTHR11820:SF7">
    <property type="entry name" value="ACYLPYRUVASE FAHD1, MITOCHONDRIAL"/>
    <property type="match status" value="1"/>
</dbReference>
<dbReference type="Pfam" id="PF01557">
    <property type="entry name" value="FAA_hydrolase"/>
    <property type="match status" value="1"/>
</dbReference>
<dbReference type="SUPFAM" id="SSF56529">
    <property type="entry name" value="FAH"/>
    <property type="match status" value="1"/>
</dbReference>
<sequence length="230" mass="25567">MNEMSSVRLPFRDGYYDVRPTKIVALAKNYAEHAREMGSEPPEEPIIFLKPPSALIGPGSSIILPRRSKRVDHEVELAVIMGKRAKNVPASKAFDYILGYTIILDITARDLQAEARKKGYPWTISKGFDTFAPIGPRVVDSRELDPSDLEIGLKVNGKIRQLGRTSQMIFKIPELIEYISHIMTLEPGDIIATGTPPGVGPLRHGDRIEAWIEGIGKMEFDVLAEDSILC</sequence>
<name>Y643_PYRHO</name>
<organism>
    <name type="scientific">Pyrococcus horikoshii (strain ATCC 700860 / DSM 12428 / JCM 9974 / NBRC 100139 / OT-3)</name>
    <dbReference type="NCBI Taxonomy" id="70601"/>
    <lineage>
        <taxon>Archaea</taxon>
        <taxon>Methanobacteriati</taxon>
        <taxon>Methanobacteriota</taxon>
        <taxon>Thermococci</taxon>
        <taxon>Thermococcales</taxon>
        <taxon>Thermococcaceae</taxon>
        <taxon>Pyrococcus</taxon>
    </lineage>
</organism>
<evidence type="ECO:0000250" key="1"/>
<evidence type="ECO:0000305" key="2"/>
<accession>O58377</accession>
<proteinExistence type="inferred from homology"/>
<protein>
    <recommendedName>
        <fullName>Uncharacterized protein PH0643</fullName>
    </recommendedName>
</protein>
<gene>
    <name type="ordered locus">PH0643</name>
</gene>
<reference key="1">
    <citation type="journal article" date="1998" name="DNA Res.">
        <title>Complete sequence and gene organization of the genome of a hyper-thermophilic archaebacterium, Pyrococcus horikoshii OT3.</title>
        <authorList>
            <person name="Kawarabayasi Y."/>
            <person name="Sawada M."/>
            <person name="Horikawa H."/>
            <person name="Haikawa Y."/>
            <person name="Hino Y."/>
            <person name="Yamamoto S."/>
            <person name="Sekine M."/>
            <person name="Baba S."/>
            <person name="Kosugi H."/>
            <person name="Hosoyama A."/>
            <person name="Nagai Y."/>
            <person name="Sakai M."/>
            <person name="Ogura K."/>
            <person name="Otsuka R."/>
            <person name="Nakazawa H."/>
            <person name="Takamiya M."/>
            <person name="Ohfuku Y."/>
            <person name="Funahashi T."/>
            <person name="Tanaka T."/>
            <person name="Kudoh Y."/>
            <person name="Yamazaki J."/>
            <person name="Kushida N."/>
            <person name="Oguchi A."/>
            <person name="Aoki K."/>
            <person name="Yoshizawa T."/>
            <person name="Nakamura Y."/>
            <person name="Robb F.T."/>
            <person name="Horikoshi K."/>
            <person name="Masuchi Y."/>
            <person name="Shizuya H."/>
            <person name="Kikuchi H."/>
        </authorList>
    </citation>
    <scope>NUCLEOTIDE SEQUENCE [LARGE SCALE GENOMIC DNA]</scope>
    <source>
        <strain>ATCC 700860 / DSM 12428 / JCM 9974 / NBRC 100139 / OT-3</strain>
    </source>
</reference>
<feature type="chain" id="PRO_0000156840" description="Uncharacterized protein PH0643">
    <location>
        <begin position="1"/>
        <end position="230"/>
    </location>
</feature>
<feature type="binding site" evidence="1">
    <location>
        <position position="74"/>
    </location>
    <ligand>
        <name>a divalent metal cation</name>
        <dbReference type="ChEBI" id="CHEBI:60240"/>
    </ligand>
</feature>
<feature type="binding site" evidence="1">
    <location>
        <position position="76"/>
    </location>
    <ligand>
        <name>a divalent metal cation</name>
        <dbReference type="ChEBI" id="CHEBI:60240"/>
    </ligand>
</feature>
<feature type="binding site" evidence="1">
    <location>
        <position position="105"/>
    </location>
    <ligand>
        <name>a divalent metal cation</name>
        <dbReference type="ChEBI" id="CHEBI:60240"/>
    </ligand>
</feature>